<feature type="signal peptide" evidence="3">
    <location>
        <begin position="1"/>
        <end position="22"/>
    </location>
</feature>
<feature type="propeptide" id="PRO_0000439438" evidence="6">
    <location>
        <begin position="23"/>
        <end position="40"/>
    </location>
</feature>
<feature type="peptide" id="PRO_0000439439" description="Lividin-3" evidence="4">
    <location>
        <begin position="43"/>
        <end position="75"/>
    </location>
</feature>
<feature type="disulfide bond" evidence="1">
    <location>
        <begin position="69"/>
        <end position="75"/>
    </location>
</feature>
<protein>
    <recommendedName>
        <fullName evidence="5">Lividin-3</fullName>
    </recommendedName>
</protein>
<sequence>MFTLKKSLLLLFFLGTISLSLCEEERDADEDEGEMTEEEVKRSVLGTVKDLLIGAGKSAAQSVLTALSCKLSNSC</sequence>
<evidence type="ECO:0000250" key="1">
    <source>
        <dbReference type="UniProtKB" id="A0AEI6"/>
    </source>
</evidence>
<evidence type="ECO:0000250" key="2">
    <source>
        <dbReference type="UniProtKB" id="E7EKE0"/>
    </source>
</evidence>
<evidence type="ECO:0000255" key="3"/>
<evidence type="ECO:0000269" key="4">
    <source>
    </source>
</evidence>
<evidence type="ECO:0000303" key="5">
    <source>
    </source>
</evidence>
<evidence type="ECO:0000305" key="6">
    <source>
    </source>
</evidence>
<evidence type="ECO:0000312" key="7">
    <source>
        <dbReference type="EMBL" id="CAJ01672.1"/>
    </source>
</evidence>
<comment type="function">
    <text evidence="2">Antimicrobial peptide.</text>
</comment>
<comment type="subcellular location">
    <subcellularLocation>
        <location evidence="3 4">Secreted</location>
    </subcellularLocation>
</comment>
<comment type="tissue specificity">
    <text evidence="6">Expressed by the skin glands.</text>
</comment>
<comment type="mass spectrometry"/>
<comment type="similarity">
    <text evidence="3">Belongs to the frog skin active peptide (FSAP) family. Brevinin subfamily.</text>
</comment>
<organism evidence="7">
    <name type="scientific">Odorrana livida</name>
    <name type="common">Green mountain frog</name>
    <name type="synonym">Polypedates lividus</name>
    <dbReference type="NCBI Taxonomy" id="121160"/>
    <lineage>
        <taxon>Eukaryota</taxon>
        <taxon>Metazoa</taxon>
        <taxon>Chordata</taxon>
        <taxon>Craniata</taxon>
        <taxon>Vertebrata</taxon>
        <taxon>Euteleostomi</taxon>
        <taxon>Amphibia</taxon>
        <taxon>Batrachia</taxon>
        <taxon>Anura</taxon>
        <taxon>Neobatrachia</taxon>
        <taxon>Ranoidea</taxon>
        <taxon>Ranidae</taxon>
        <taxon>Odorrana</taxon>
    </lineage>
</organism>
<keyword id="KW-0878">Amphibian defense peptide</keyword>
<keyword id="KW-0929">Antimicrobial</keyword>
<keyword id="KW-0165">Cleavage on pair of basic residues</keyword>
<keyword id="KW-0903">Direct protein sequencing</keyword>
<keyword id="KW-1015">Disulfide bond</keyword>
<keyword id="KW-0964">Secreted</keyword>
<keyword id="KW-0732">Signal</keyword>
<accession>Q2UXR2</accession>
<dbReference type="EMBL" id="AM039664">
    <property type="protein sequence ID" value="CAJ01672.1"/>
    <property type="molecule type" value="mRNA"/>
</dbReference>
<dbReference type="SMR" id="Q2UXR2"/>
<dbReference type="GO" id="GO:0005576">
    <property type="term" value="C:extracellular region"/>
    <property type="evidence" value="ECO:0007669"/>
    <property type="project" value="UniProtKB-SubCell"/>
</dbReference>
<dbReference type="GO" id="GO:0050829">
    <property type="term" value="P:defense response to Gram-negative bacterium"/>
    <property type="evidence" value="ECO:0007669"/>
    <property type="project" value="UniProtKB-ARBA"/>
</dbReference>
<dbReference type="GO" id="GO:0050830">
    <property type="term" value="P:defense response to Gram-positive bacterium"/>
    <property type="evidence" value="ECO:0007669"/>
    <property type="project" value="UniProtKB-ARBA"/>
</dbReference>
<dbReference type="InterPro" id="IPR012521">
    <property type="entry name" value="Antimicrobial_frog_2"/>
</dbReference>
<dbReference type="InterPro" id="IPR004275">
    <property type="entry name" value="Frog_antimicrobial_propeptide"/>
</dbReference>
<dbReference type="Pfam" id="PF08023">
    <property type="entry name" value="Antimicrobial_2"/>
    <property type="match status" value="1"/>
</dbReference>
<dbReference type="Pfam" id="PF03032">
    <property type="entry name" value="FSAP_sig_propep"/>
    <property type="match status" value="1"/>
</dbReference>
<proteinExistence type="evidence at protein level"/>
<reference evidence="7" key="1">
    <citation type="journal article" date="2006" name="Peptides">
        <title>Lividins: novel antimicrobial peptide homologs from the skin secretion of the Chinese Large Odorous frog, Rana (Odorrana) livida. Identification by 'shotgun' cDNA cloning and sequence analysis.</title>
        <authorList>
            <person name="Zhou M."/>
            <person name="Chen T."/>
            <person name="Walker B."/>
            <person name="Shaw C."/>
        </authorList>
    </citation>
    <scope>NUCLEOTIDE SEQUENCE [MRNA]</scope>
    <scope>PROTEIN SEQUENCE OF 43-75</scope>
    <scope>SUBCELLULAR LOCATION</scope>
    <scope>MASS SPECTROMETRY</scope>
    <scope>IDENTIFICATION BY MASS SPECTROMETRY</scope>
    <source>
        <tissue evidence="5">Skin secretion</tissue>
    </source>
</reference>
<name>LDN3_ODOLI</name>